<dbReference type="EC" id="2.7.11.24" evidence="7"/>
<dbReference type="EMBL" id="CM001234">
    <property type="protein sequence ID" value="EHA50760.1"/>
    <property type="status" value="ALT_SEQ"/>
    <property type="molecule type" value="Genomic_DNA"/>
</dbReference>
<dbReference type="EMBL" id="CM001234">
    <property type="protein sequence ID" value="EHA50761.1"/>
    <property type="molecule type" value="Genomic_DNA"/>
</dbReference>
<dbReference type="RefSeq" id="XP_003717079.1">
    <property type="nucleotide sequence ID" value="XM_003717031.1"/>
</dbReference>
<dbReference type="RefSeq" id="XP_003717080.1">
    <property type="nucleotide sequence ID" value="XM_003717032.1"/>
</dbReference>
<dbReference type="SMR" id="G4N6Z6"/>
<dbReference type="FunCoup" id="G4N6Z6">
    <property type="interactions" value="559"/>
</dbReference>
<dbReference type="STRING" id="242507.G4N6Z6"/>
<dbReference type="EnsemblFungi" id="MGG_06482T0">
    <property type="protein sequence ID" value="MGG_06482T0"/>
    <property type="gene ID" value="MGG_06482"/>
</dbReference>
<dbReference type="EnsemblFungi" id="MGG_06482T1">
    <property type="protein sequence ID" value="MGG_06482T1"/>
    <property type="gene ID" value="MGG_06482"/>
</dbReference>
<dbReference type="GeneID" id="2684637"/>
<dbReference type="KEGG" id="mgr:MGG_06482"/>
<dbReference type="VEuPathDB" id="FungiDB:MGG_06482"/>
<dbReference type="eggNOG" id="KOG0581">
    <property type="taxonomic scope" value="Eukaryota"/>
</dbReference>
<dbReference type="HOGENOM" id="CLU_000288_63_23_1"/>
<dbReference type="InParanoid" id="G4N6Z6"/>
<dbReference type="OrthoDB" id="10252354at2759"/>
<dbReference type="PHI-base" id="PHI:11085"/>
<dbReference type="PHI-base" id="PHI:11537"/>
<dbReference type="Proteomes" id="UP000009058">
    <property type="component" value="Chromosome 4"/>
</dbReference>
<dbReference type="GO" id="GO:0005737">
    <property type="term" value="C:cytoplasm"/>
    <property type="evidence" value="ECO:0007669"/>
    <property type="project" value="EnsemblFungi"/>
</dbReference>
<dbReference type="GO" id="GO:0000935">
    <property type="term" value="C:division septum"/>
    <property type="evidence" value="ECO:0007669"/>
    <property type="project" value="EnsemblFungi"/>
</dbReference>
<dbReference type="GO" id="GO:0005524">
    <property type="term" value="F:ATP binding"/>
    <property type="evidence" value="ECO:0007669"/>
    <property type="project" value="UniProtKB-KW"/>
</dbReference>
<dbReference type="GO" id="GO:0004707">
    <property type="term" value="F:MAP kinase activity"/>
    <property type="evidence" value="ECO:0007669"/>
    <property type="project" value="UniProtKB-EC"/>
</dbReference>
<dbReference type="GO" id="GO:0004708">
    <property type="term" value="F:MAP kinase kinase activity"/>
    <property type="evidence" value="ECO:0000314"/>
    <property type="project" value="GO_Central"/>
</dbReference>
<dbReference type="GO" id="GO:0000196">
    <property type="term" value="P:cell integrity MAPK cascade"/>
    <property type="evidence" value="ECO:0007669"/>
    <property type="project" value="EnsemblFungi"/>
</dbReference>
<dbReference type="GO" id="GO:0000165">
    <property type="term" value="P:MAPK cascade"/>
    <property type="evidence" value="ECO:0000314"/>
    <property type="project" value="GO_Central"/>
</dbReference>
<dbReference type="GO" id="GO:0075018">
    <property type="term" value="P:positive regulation of appressorium formation"/>
    <property type="evidence" value="ECO:0000315"/>
    <property type="project" value="GO_Central"/>
</dbReference>
<dbReference type="GO" id="GO:0050850">
    <property type="term" value="P:positive regulation of calcium-mediated signaling"/>
    <property type="evidence" value="ECO:0007669"/>
    <property type="project" value="EnsemblFungi"/>
</dbReference>
<dbReference type="FunFam" id="3.30.200.20:FF:000294">
    <property type="entry name" value="Map kinase kinase"/>
    <property type="match status" value="1"/>
</dbReference>
<dbReference type="FunFam" id="1.10.510.10:FF:000263">
    <property type="entry name" value="MAP kinase skh1/pek1"/>
    <property type="match status" value="1"/>
</dbReference>
<dbReference type="Gene3D" id="3.30.200.20">
    <property type="entry name" value="Phosphorylase Kinase, domain 1"/>
    <property type="match status" value="1"/>
</dbReference>
<dbReference type="Gene3D" id="1.10.510.10">
    <property type="entry name" value="Transferase(Phosphotransferase) domain 1"/>
    <property type="match status" value="1"/>
</dbReference>
<dbReference type="InterPro" id="IPR011009">
    <property type="entry name" value="Kinase-like_dom_sf"/>
</dbReference>
<dbReference type="InterPro" id="IPR050915">
    <property type="entry name" value="MAP_kinase_kinase"/>
</dbReference>
<dbReference type="InterPro" id="IPR000719">
    <property type="entry name" value="Prot_kinase_dom"/>
</dbReference>
<dbReference type="InterPro" id="IPR017441">
    <property type="entry name" value="Protein_kinase_ATP_BS"/>
</dbReference>
<dbReference type="InterPro" id="IPR008271">
    <property type="entry name" value="Ser/Thr_kinase_AS"/>
</dbReference>
<dbReference type="PANTHER" id="PTHR47448">
    <property type="entry name" value="DUAL SPECIFICITY MITOGEN-ACTIVATED PROTEIN KINASE KINASE DSOR1-LIKE PROTEIN"/>
    <property type="match status" value="1"/>
</dbReference>
<dbReference type="PANTHER" id="PTHR47448:SF5">
    <property type="entry name" value="MITOGEN-ACTIVATED PROTEIN KINASE KINAE MKK2"/>
    <property type="match status" value="1"/>
</dbReference>
<dbReference type="Pfam" id="PF00069">
    <property type="entry name" value="Pkinase"/>
    <property type="match status" value="1"/>
</dbReference>
<dbReference type="SMART" id="SM00220">
    <property type="entry name" value="S_TKc"/>
    <property type="match status" value="1"/>
</dbReference>
<dbReference type="SUPFAM" id="SSF56112">
    <property type="entry name" value="Protein kinase-like (PK-like)"/>
    <property type="match status" value="1"/>
</dbReference>
<dbReference type="PROSITE" id="PS00107">
    <property type="entry name" value="PROTEIN_KINASE_ATP"/>
    <property type="match status" value="1"/>
</dbReference>
<dbReference type="PROSITE" id="PS50011">
    <property type="entry name" value="PROTEIN_KINASE_DOM"/>
    <property type="match status" value="1"/>
</dbReference>
<dbReference type="PROSITE" id="PS00108">
    <property type="entry name" value="PROTEIN_KINASE_ST"/>
    <property type="match status" value="1"/>
</dbReference>
<name>MKK2_PYRO7</name>
<feature type="chain" id="PRO_0000453096" description="Mitogen-activated protein kinase kinae MKK2">
    <location>
        <begin position="1"/>
        <end position="527"/>
    </location>
</feature>
<feature type="domain" description="Protein kinase" evidence="2">
    <location>
        <begin position="227"/>
        <end position="497"/>
    </location>
</feature>
<feature type="region of interest" description="Disordered" evidence="3">
    <location>
        <begin position="1"/>
        <end position="143"/>
    </location>
</feature>
<feature type="region of interest" description="Disordered" evidence="3">
    <location>
        <begin position="156"/>
        <end position="189"/>
    </location>
</feature>
<feature type="compositionally biased region" description="Low complexity" evidence="3">
    <location>
        <begin position="107"/>
        <end position="129"/>
    </location>
</feature>
<feature type="compositionally biased region" description="Polar residues" evidence="3">
    <location>
        <begin position="134"/>
        <end position="143"/>
    </location>
</feature>
<feature type="compositionally biased region" description="Basic and acidic residues" evidence="3">
    <location>
        <begin position="177"/>
        <end position="189"/>
    </location>
</feature>
<feature type="binding site" evidence="2">
    <location>
        <begin position="233"/>
        <end position="241"/>
    </location>
    <ligand>
        <name>ATP</name>
        <dbReference type="ChEBI" id="CHEBI:30616"/>
    </ligand>
</feature>
<feature type="binding site" evidence="2">
    <location>
        <position position="256"/>
    </location>
    <ligand>
        <name>ATP</name>
        <dbReference type="ChEBI" id="CHEBI:30616"/>
    </ligand>
</feature>
<comment type="function">
    <text evidence="1 4">Mitogen-activated protein kinase kinase; part of the MCK1-MKK2-MPS1 MAP kinase (MAPK) signal transduction cascade that is essential for appressorium formation, penetration and invasive growth (PubMed:28244240). Beside its role in pathogenesis, the MPS1 cascade is active in conidiation and cellular stress responses (By similarity). Targets downstream of the the MPS1-MAPK pathway include transcription factors MIG1 and SWI6, as well as GSK1 and MPG1 (PubMed:28244240).</text>
</comment>
<comment type="catalytic activity">
    <reaction evidence="7">
        <text>L-seryl-[protein] + ATP = O-phospho-L-seryl-[protein] + ADP + H(+)</text>
        <dbReference type="Rhea" id="RHEA:17989"/>
        <dbReference type="Rhea" id="RHEA-COMP:9863"/>
        <dbReference type="Rhea" id="RHEA-COMP:11604"/>
        <dbReference type="ChEBI" id="CHEBI:15378"/>
        <dbReference type="ChEBI" id="CHEBI:29999"/>
        <dbReference type="ChEBI" id="CHEBI:30616"/>
        <dbReference type="ChEBI" id="CHEBI:83421"/>
        <dbReference type="ChEBI" id="CHEBI:456216"/>
        <dbReference type="EC" id="2.7.11.24"/>
    </reaction>
    <physiologicalReaction direction="left-to-right" evidence="7">
        <dbReference type="Rhea" id="RHEA:17990"/>
    </physiologicalReaction>
</comment>
<comment type="catalytic activity">
    <reaction evidence="7">
        <text>L-threonyl-[protein] + ATP = O-phospho-L-threonyl-[protein] + ADP + H(+)</text>
        <dbReference type="Rhea" id="RHEA:46608"/>
        <dbReference type="Rhea" id="RHEA-COMP:11060"/>
        <dbReference type="Rhea" id="RHEA-COMP:11605"/>
        <dbReference type="ChEBI" id="CHEBI:15378"/>
        <dbReference type="ChEBI" id="CHEBI:30013"/>
        <dbReference type="ChEBI" id="CHEBI:30616"/>
        <dbReference type="ChEBI" id="CHEBI:61977"/>
        <dbReference type="ChEBI" id="CHEBI:456216"/>
        <dbReference type="EC" id="2.7.11.24"/>
    </reaction>
    <physiologicalReaction direction="left-to-right" evidence="7">
        <dbReference type="Rhea" id="RHEA:46609"/>
    </physiologicalReaction>
</comment>
<comment type="subunit">
    <text evidence="4">Interacts with the adapter protein MST50.</text>
</comment>
<comment type="similarity">
    <text evidence="6">Belongs to the protein kinase superfamily. STE Ser/Thr protein kinase family. MAP kinase kinase subfamily.</text>
</comment>
<comment type="sequence caution" evidence="6">
    <conflict type="erroneous gene model prediction">
        <sequence resource="EMBL-CDS" id="EHA50760"/>
    </conflict>
</comment>
<proteinExistence type="evidence at protein level"/>
<sequence length="527" mass="56415">MHDQEAANGGETATNPISSLDVPTPPATTIPTLSSPAPLLRPAIPGARSAGARTPRLGLAIPPSPNVKPVGGAPGRPPLPTLHLATPMGSSVTPHEQPPGRPSIVTQQGQSASGGSESSAAHSRSGSFGPLDGRTSNPTSAGSQYSALSFASHFGIGSTRPQGTPDPASAVGSIYSERSDGGAGMDKDGNLKGLENFDKLTIDKARTADVEDLDVEGWKIASMEKRIVELGGLGEGAGGAVTRCKLTGGKTVFALKVITANPDPDVKKQIMRELDFNIQCASEHICRYYGAFEDPSTATISIAMEFCEGGSLDSIYKEVKRLGGRTGEKVLGKIAEGVLRGLTYLNSKKIIHRDIKPSNILLCRNGDVKLCDFGVSGDFGTKGEANTFIGTSYYMAPERITGQSYTITSDVWSTGVTLLEVAQHRFPFPADGTEMAPRAGLIDLLTYIVRQPIPKLKDEPSAQISWSENFKYFIECCLEKDPQRRASPWRMLEHPWMVDMKSKRVNMTRYLAQVWGWDDKGEAKPAE</sequence>
<gene>
    <name evidence="5" type="primary">MKK2</name>
    <name type="ORF">MGG_06482</name>
</gene>
<accession>G4N6Z6</accession>
<accession>G4N6Z7</accession>
<protein>
    <recommendedName>
        <fullName evidence="5">Mitogen-activated protein kinase kinae MKK2</fullName>
        <shortName evidence="5">MAPKK MKK2</shortName>
        <ecNumber evidence="7">2.7.11.24</ecNumber>
    </recommendedName>
    <alternativeName>
        <fullName evidence="5">MEK MKK2</fullName>
    </alternativeName>
</protein>
<organism>
    <name type="scientific">Pyricularia oryzae (strain 70-15 / ATCC MYA-4617 / FGSC 8958)</name>
    <name type="common">Rice blast fungus</name>
    <name type="synonym">Magnaporthe oryzae</name>
    <dbReference type="NCBI Taxonomy" id="242507"/>
    <lineage>
        <taxon>Eukaryota</taxon>
        <taxon>Fungi</taxon>
        <taxon>Dikarya</taxon>
        <taxon>Ascomycota</taxon>
        <taxon>Pezizomycotina</taxon>
        <taxon>Sordariomycetes</taxon>
        <taxon>Sordariomycetidae</taxon>
        <taxon>Magnaporthales</taxon>
        <taxon>Pyriculariaceae</taxon>
        <taxon>Pyricularia</taxon>
    </lineage>
</organism>
<keyword id="KW-0067">ATP-binding</keyword>
<keyword id="KW-0418">Kinase</keyword>
<keyword id="KW-0547">Nucleotide-binding</keyword>
<keyword id="KW-1185">Reference proteome</keyword>
<keyword id="KW-0808">Transferase</keyword>
<keyword id="KW-0843">Virulence</keyword>
<reference key="1">
    <citation type="journal article" date="2005" name="Nature">
        <title>The genome sequence of the rice blast fungus Magnaporthe grisea.</title>
        <authorList>
            <person name="Dean R.A."/>
            <person name="Talbot N.J."/>
            <person name="Ebbole D.J."/>
            <person name="Farman M.L."/>
            <person name="Mitchell T.K."/>
            <person name="Orbach M.J."/>
            <person name="Thon M.R."/>
            <person name="Kulkarni R."/>
            <person name="Xu J.-R."/>
            <person name="Pan H."/>
            <person name="Read N.D."/>
            <person name="Lee Y.-H."/>
            <person name="Carbone I."/>
            <person name="Brown D."/>
            <person name="Oh Y.Y."/>
            <person name="Donofrio N."/>
            <person name="Jeong J.S."/>
            <person name="Soanes D.M."/>
            <person name="Djonovic S."/>
            <person name="Kolomiets E."/>
            <person name="Rehmeyer C."/>
            <person name="Li W."/>
            <person name="Harding M."/>
            <person name="Kim S."/>
            <person name="Lebrun M.-H."/>
            <person name="Bohnert H."/>
            <person name="Coughlan S."/>
            <person name="Butler J."/>
            <person name="Calvo S.E."/>
            <person name="Ma L.-J."/>
            <person name="Nicol R."/>
            <person name="Purcell S."/>
            <person name="Nusbaum C."/>
            <person name="Galagan J.E."/>
            <person name="Birren B.W."/>
        </authorList>
    </citation>
    <scope>NUCLEOTIDE SEQUENCE [LARGE SCALE GENOMIC DNA]</scope>
    <source>
        <strain>70-15 / ATCC MYA-4617 / FGSC 8958</strain>
    </source>
</reference>
<reference key="2">
    <citation type="journal article" date="2017" name="Environ. Microbiol.">
        <title>MST50 is involved in multiple MAP kinase signaling pathways in Magnaporthe oryzae.</title>
        <authorList>
            <person name="Li G."/>
            <person name="Zhang X."/>
            <person name="Tian H."/>
            <person name="Choi Y.E."/>
            <person name="Tao W.A."/>
            <person name="Xu J.R."/>
        </authorList>
    </citation>
    <scope>FUNCTION</scope>
    <scope>INTERACTION WITH MTS50</scope>
</reference>
<reference key="3">
    <citation type="journal article" date="2017" name="Environ. Microbiol.">
        <title>Expression of HopAI interferes with MAP kinase signalling in Magnaporthe oryzae.</title>
        <authorList>
            <person name="Zhang X."/>
            <person name="Liu W."/>
            <person name="Li Y."/>
            <person name="Li G."/>
            <person name="Xu J.R."/>
        </authorList>
    </citation>
    <scope>FUNCTION</scope>
</reference>
<evidence type="ECO:0000250" key="1">
    <source>
        <dbReference type="UniProtKB" id="G4N0Z0"/>
    </source>
</evidence>
<evidence type="ECO:0000255" key="2">
    <source>
        <dbReference type="PROSITE-ProRule" id="PRU00159"/>
    </source>
</evidence>
<evidence type="ECO:0000256" key="3">
    <source>
        <dbReference type="SAM" id="MobiDB-lite"/>
    </source>
</evidence>
<evidence type="ECO:0000269" key="4">
    <source>
    </source>
</evidence>
<evidence type="ECO:0000303" key="5">
    <source>
    </source>
</evidence>
<evidence type="ECO:0000305" key="6"/>
<evidence type="ECO:0000305" key="7">
    <source>
    </source>
</evidence>